<evidence type="ECO:0000255" key="1">
    <source>
        <dbReference type="HAMAP-Rule" id="MF_00254"/>
    </source>
</evidence>
<organism>
    <name type="scientific">Rickettsia rickettsii (strain Sheila Smith)</name>
    <dbReference type="NCBI Taxonomy" id="392021"/>
    <lineage>
        <taxon>Bacteria</taxon>
        <taxon>Pseudomonadati</taxon>
        <taxon>Pseudomonadota</taxon>
        <taxon>Alphaproteobacteria</taxon>
        <taxon>Rickettsiales</taxon>
        <taxon>Rickettsiaceae</taxon>
        <taxon>Rickettsieae</taxon>
        <taxon>Rickettsia</taxon>
        <taxon>spotted fever group</taxon>
    </lineage>
</organism>
<comment type="catalytic activity">
    <reaction evidence="1">
        <text>tRNA(Gly) + glycine + ATP = glycyl-tRNA(Gly) + AMP + diphosphate</text>
        <dbReference type="Rhea" id="RHEA:16013"/>
        <dbReference type="Rhea" id="RHEA-COMP:9664"/>
        <dbReference type="Rhea" id="RHEA-COMP:9683"/>
        <dbReference type="ChEBI" id="CHEBI:30616"/>
        <dbReference type="ChEBI" id="CHEBI:33019"/>
        <dbReference type="ChEBI" id="CHEBI:57305"/>
        <dbReference type="ChEBI" id="CHEBI:78442"/>
        <dbReference type="ChEBI" id="CHEBI:78522"/>
        <dbReference type="ChEBI" id="CHEBI:456215"/>
        <dbReference type="EC" id="6.1.1.14"/>
    </reaction>
</comment>
<comment type="subunit">
    <text evidence="1">Tetramer of two alpha and two beta subunits.</text>
</comment>
<comment type="subcellular location">
    <subcellularLocation>
        <location evidence="1">Cytoplasm</location>
    </subcellularLocation>
</comment>
<comment type="similarity">
    <text evidence="1">Belongs to the class-II aminoacyl-tRNA synthetase family.</text>
</comment>
<name>SYGA_RICRS</name>
<keyword id="KW-0030">Aminoacyl-tRNA synthetase</keyword>
<keyword id="KW-0067">ATP-binding</keyword>
<keyword id="KW-0963">Cytoplasm</keyword>
<keyword id="KW-0436">Ligase</keyword>
<keyword id="KW-0547">Nucleotide-binding</keyword>
<keyword id="KW-0648">Protein biosynthesis</keyword>
<proteinExistence type="inferred from homology"/>
<protein>
    <recommendedName>
        <fullName evidence="1">Glycine--tRNA ligase alpha subunit</fullName>
        <ecNumber evidence="1">6.1.1.14</ecNumber>
    </recommendedName>
    <alternativeName>
        <fullName evidence="1">Glycyl-tRNA synthetase alpha subunit</fullName>
        <shortName evidence="1">GlyRS</shortName>
    </alternativeName>
</protein>
<reference key="1">
    <citation type="submission" date="2007-09" db="EMBL/GenBank/DDBJ databases">
        <title>Complete genome sequence of Rickettsia rickettsii.</title>
        <authorList>
            <person name="Madan A."/>
            <person name="Fahey J."/>
            <person name="Helton E."/>
            <person name="Ketteman M."/>
            <person name="Madan A."/>
            <person name="Rodrigues S."/>
            <person name="Sanchez A."/>
            <person name="Dasch G."/>
            <person name="Eremeeva M."/>
        </authorList>
    </citation>
    <scope>NUCLEOTIDE SEQUENCE [LARGE SCALE GENOMIC DNA]</scope>
    <source>
        <strain>Sheila Smith</strain>
    </source>
</reference>
<accession>A8GU09</accession>
<sequence>MKKLSFQQIILTLQNYWQDYGCAILQPYDAYVGAGTFHPATVLRCLGTKPWSVAYVQPSRRPGDSRYGMHPNRMQHYYQFQVILKPSPDNIQELYLKSLECLGIDLKIHDIRFVEDDWESPTLGAAGLGWEVWCNGMEVSQFTYMQQIGGIECRPVAGEITYGLERLALYIQGVDEVRELDWNGQVGEKALKYGEVDFEAEWQFSKYNLELADSEMLLRHFKDSEDQCERLIKANLPMPAYDECLKASHAFNQLNALGVISVTERASYVLRVRHLARICCTKWLEMNK</sequence>
<gene>
    <name evidence="1" type="primary">glyQ</name>
    <name type="ordered locus">A1G_07215</name>
</gene>
<feature type="chain" id="PRO_1000047479" description="Glycine--tRNA ligase alpha subunit">
    <location>
        <begin position="1"/>
        <end position="288"/>
    </location>
</feature>
<dbReference type="EC" id="6.1.1.14" evidence="1"/>
<dbReference type="EMBL" id="CP000848">
    <property type="protein sequence ID" value="ABV76884.1"/>
    <property type="molecule type" value="Genomic_DNA"/>
</dbReference>
<dbReference type="RefSeq" id="WP_012151423.1">
    <property type="nucleotide sequence ID" value="NZ_CP121767.1"/>
</dbReference>
<dbReference type="SMR" id="A8GU09"/>
<dbReference type="GeneID" id="79937916"/>
<dbReference type="KEGG" id="rri:A1G_07215"/>
<dbReference type="HOGENOM" id="CLU_057066_1_0_5"/>
<dbReference type="Proteomes" id="UP000006832">
    <property type="component" value="Chromosome"/>
</dbReference>
<dbReference type="GO" id="GO:0005829">
    <property type="term" value="C:cytosol"/>
    <property type="evidence" value="ECO:0007669"/>
    <property type="project" value="TreeGrafter"/>
</dbReference>
<dbReference type="GO" id="GO:0005524">
    <property type="term" value="F:ATP binding"/>
    <property type="evidence" value="ECO:0007669"/>
    <property type="project" value="UniProtKB-UniRule"/>
</dbReference>
<dbReference type="GO" id="GO:0004820">
    <property type="term" value="F:glycine-tRNA ligase activity"/>
    <property type="evidence" value="ECO:0007669"/>
    <property type="project" value="UniProtKB-UniRule"/>
</dbReference>
<dbReference type="GO" id="GO:0006426">
    <property type="term" value="P:glycyl-tRNA aminoacylation"/>
    <property type="evidence" value="ECO:0007669"/>
    <property type="project" value="UniProtKB-UniRule"/>
</dbReference>
<dbReference type="FunFam" id="3.30.930.10:FF:000006">
    <property type="entry name" value="Glycine--tRNA ligase alpha subunit"/>
    <property type="match status" value="1"/>
</dbReference>
<dbReference type="Gene3D" id="3.30.930.10">
    <property type="entry name" value="Bira Bifunctional Protein, Domain 2"/>
    <property type="match status" value="1"/>
</dbReference>
<dbReference type="Gene3D" id="1.20.58.180">
    <property type="entry name" value="Class II aaRS and biotin synthetases, domain 2"/>
    <property type="match status" value="1"/>
</dbReference>
<dbReference type="HAMAP" id="MF_00254">
    <property type="entry name" value="Gly_tRNA_synth_alpha"/>
    <property type="match status" value="1"/>
</dbReference>
<dbReference type="InterPro" id="IPR045864">
    <property type="entry name" value="aa-tRNA-synth_II/BPL/LPL"/>
</dbReference>
<dbReference type="InterPro" id="IPR006194">
    <property type="entry name" value="Gly-tRNA-synth_heterodimer"/>
</dbReference>
<dbReference type="InterPro" id="IPR002310">
    <property type="entry name" value="Gly-tRNA_ligase_asu"/>
</dbReference>
<dbReference type="NCBIfam" id="TIGR00388">
    <property type="entry name" value="glyQ"/>
    <property type="match status" value="1"/>
</dbReference>
<dbReference type="NCBIfam" id="NF006827">
    <property type="entry name" value="PRK09348.1"/>
    <property type="match status" value="1"/>
</dbReference>
<dbReference type="PANTHER" id="PTHR30075:SF2">
    <property type="entry name" value="GLYCINE--TRNA LIGASE, CHLOROPLASTIC_MITOCHONDRIAL 2"/>
    <property type="match status" value="1"/>
</dbReference>
<dbReference type="PANTHER" id="PTHR30075">
    <property type="entry name" value="GLYCYL-TRNA SYNTHETASE"/>
    <property type="match status" value="1"/>
</dbReference>
<dbReference type="Pfam" id="PF02091">
    <property type="entry name" value="tRNA-synt_2e"/>
    <property type="match status" value="1"/>
</dbReference>
<dbReference type="PRINTS" id="PR01044">
    <property type="entry name" value="TRNASYNTHGA"/>
</dbReference>
<dbReference type="SUPFAM" id="SSF55681">
    <property type="entry name" value="Class II aaRS and biotin synthetases"/>
    <property type="match status" value="1"/>
</dbReference>
<dbReference type="PROSITE" id="PS50861">
    <property type="entry name" value="AA_TRNA_LIGASE_II_GLYAB"/>
    <property type="match status" value="1"/>
</dbReference>